<reference key="1">
    <citation type="journal article" date="2002" name="Nature">
        <title>Complete genome sequence of the model actinomycete Streptomyces coelicolor A3(2).</title>
        <authorList>
            <person name="Bentley S.D."/>
            <person name="Chater K.F."/>
            <person name="Cerdeno-Tarraga A.-M."/>
            <person name="Challis G.L."/>
            <person name="Thomson N.R."/>
            <person name="James K.D."/>
            <person name="Harris D.E."/>
            <person name="Quail M.A."/>
            <person name="Kieser H."/>
            <person name="Harper D."/>
            <person name="Bateman A."/>
            <person name="Brown S."/>
            <person name="Chandra G."/>
            <person name="Chen C.W."/>
            <person name="Collins M."/>
            <person name="Cronin A."/>
            <person name="Fraser A."/>
            <person name="Goble A."/>
            <person name="Hidalgo J."/>
            <person name="Hornsby T."/>
            <person name="Howarth S."/>
            <person name="Huang C.-H."/>
            <person name="Kieser T."/>
            <person name="Larke L."/>
            <person name="Murphy L.D."/>
            <person name="Oliver K."/>
            <person name="O'Neil S."/>
            <person name="Rabbinowitsch E."/>
            <person name="Rajandream M.A."/>
            <person name="Rutherford K.M."/>
            <person name="Rutter S."/>
            <person name="Seeger K."/>
            <person name="Saunders D."/>
            <person name="Sharp S."/>
            <person name="Squares R."/>
            <person name="Squares S."/>
            <person name="Taylor K."/>
            <person name="Warren T."/>
            <person name="Wietzorrek A."/>
            <person name="Woodward J.R."/>
            <person name="Barrell B.G."/>
            <person name="Parkhill J."/>
            <person name="Hopwood D.A."/>
        </authorList>
    </citation>
    <scope>NUCLEOTIDE SEQUENCE [LARGE SCALE GENOMIC DNA]</scope>
    <source>
        <strain>ATCC BAA-471 / A3(2) / M145</strain>
    </source>
</reference>
<accession>O54101</accession>
<protein>
    <recommendedName>
        <fullName>Putative membrane protein SCO5905</fullName>
    </recommendedName>
</protein>
<comment type="subcellular location">
    <subcellularLocation>
        <location evidence="3">Cell membrane</location>
        <topology evidence="3">Multi-pass membrane protein</topology>
    </subcellularLocation>
</comment>
<comment type="similarity">
    <text evidence="3">Belongs to the resistance-nodulation-cell division (RND) (TC 2.A.6) family. MmpL subfamily.</text>
</comment>
<keyword id="KW-1003">Cell membrane</keyword>
<keyword id="KW-0472">Membrane</keyword>
<keyword id="KW-1185">Reference proteome</keyword>
<keyword id="KW-0812">Transmembrane</keyword>
<keyword id="KW-1133">Transmembrane helix</keyword>
<gene>
    <name type="ordered locus">SCO5905</name>
    <name type="ORF">SC10A5.10c</name>
</gene>
<feature type="chain" id="PRO_0000103582" description="Putative membrane protein SCO5905">
    <location>
        <begin position="1"/>
        <end position="847"/>
    </location>
</feature>
<feature type="transmembrane region" description="Helical" evidence="1">
    <location>
        <begin position="18"/>
        <end position="38"/>
    </location>
</feature>
<feature type="transmembrane region" description="Helical" evidence="1">
    <location>
        <begin position="187"/>
        <end position="207"/>
    </location>
</feature>
<feature type="transmembrane region" description="Helical" evidence="1">
    <location>
        <begin position="215"/>
        <end position="235"/>
    </location>
</feature>
<feature type="transmembrane region" description="Helical" evidence="1">
    <location>
        <begin position="248"/>
        <end position="268"/>
    </location>
</feature>
<feature type="transmembrane region" description="Helical" evidence="1">
    <location>
        <begin position="302"/>
        <end position="322"/>
    </location>
</feature>
<feature type="transmembrane region" description="Helical" evidence="1">
    <location>
        <begin position="326"/>
        <end position="346"/>
    </location>
</feature>
<feature type="transmembrane region" description="Helical" evidence="1">
    <location>
        <begin position="381"/>
        <end position="401"/>
    </location>
</feature>
<feature type="transmembrane region" description="Helical" evidence="1">
    <location>
        <begin position="539"/>
        <end position="559"/>
    </location>
</feature>
<feature type="transmembrane region" description="Helical" evidence="1">
    <location>
        <begin position="562"/>
        <end position="582"/>
    </location>
</feature>
<feature type="transmembrane region" description="Helical" evidence="1">
    <location>
        <begin position="600"/>
        <end position="620"/>
    </location>
</feature>
<feature type="transmembrane region" description="Helical" evidence="1">
    <location>
        <begin position="643"/>
        <end position="663"/>
    </location>
</feature>
<feature type="transmembrane region" description="Helical" evidence="1">
    <location>
        <begin position="672"/>
        <end position="692"/>
    </location>
</feature>
<feature type="transmembrane region" description="Helical" evidence="1">
    <location>
        <begin position="744"/>
        <end position="764"/>
    </location>
</feature>
<feature type="transmembrane region" description="Helical" evidence="1">
    <location>
        <begin position="778"/>
        <end position="798"/>
    </location>
</feature>
<feature type="transmembrane region" description="Helical" evidence="1">
    <location>
        <begin position="808"/>
        <end position="828"/>
    </location>
</feature>
<feature type="region of interest" description="Disordered" evidence="2">
    <location>
        <begin position="708"/>
        <end position="729"/>
    </location>
</feature>
<proteinExistence type="inferred from homology"/>
<dbReference type="EMBL" id="AL939125">
    <property type="protein sequence ID" value="CAA16442.1"/>
    <property type="molecule type" value="Genomic_DNA"/>
</dbReference>
<dbReference type="PIR" id="T34577">
    <property type="entry name" value="T34577"/>
</dbReference>
<dbReference type="RefSeq" id="NP_630023.1">
    <property type="nucleotide sequence ID" value="NC_003888.3"/>
</dbReference>
<dbReference type="RefSeq" id="WP_011030524.1">
    <property type="nucleotide sequence ID" value="NZ_VNID01000007.1"/>
</dbReference>
<dbReference type="SMR" id="O54101"/>
<dbReference type="STRING" id="100226.gene:17763565"/>
<dbReference type="PaxDb" id="100226-SCO5905"/>
<dbReference type="KEGG" id="sco:SCO5905"/>
<dbReference type="PATRIC" id="fig|100226.15.peg.6003"/>
<dbReference type="eggNOG" id="COG2409">
    <property type="taxonomic scope" value="Bacteria"/>
</dbReference>
<dbReference type="HOGENOM" id="CLU_005108_4_0_11"/>
<dbReference type="InParanoid" id="O54101"/>
<dbReference type="OrthoDB" id="2365435at2"/>
<dbReference type="PhylomeDB" id="O54101"/>
<dbReference type="Proteomes" id="UP000001973">
    <property type="component" value="Chromosome"/>
</dbReference>
<dbReference type="GO" id="GO:0005886">
    <property type="term" value="C:plasma membrane"/>
    <property type="evidence" value="ECO:0007669"/>
    <property type="project" value="UniProtKB-SubCell"/>
</dbReference>
<dbReference type="Gene3D" id="1.20.1640.10">
    <property type="entry name" value="Multidrug efflux transporter AcrB transmembrane domain"/>
    <property type="match status" value="2"/>
</dbReference>
<dbReference type="InterPro" id="IPR023845">
    <property type="entry name" value="DUF3817_TM"/>
</dbReference>
<dbReference type="InterPro" id="IPR004869">
    <property type="entry name" value="MMPL_dom"/>
</dbReference>
<dbReference type="InterPro" id="IPR050545">
    <property type="entry name" value="Mycobact_MmpL"/>
</dbReference>
<dbReference type="InterPro" id="IPR000731">
    <property type="entry name" value="SSD"/>
</dbReference>
<dbReference type="NCBIfam" id="TIGR03954">
    <property type="entry name" value="integ_memb_HG"/>
    <property type="match status" value="1"/>
</dbReference>
<dbReference type="PANTHER" id="PTHR33406">
    <property type="entry name" value="MEMBRANE PROTEIN MJ1562-RELATED"/>
    <property type="match status" value="1"/>
</dbReference>
<dbReference type="PANTHER" id="PTHR33406:SF6">
    <property type="entry name" value="MEMBRANE PROTEIN YDGH-RELATED"/>
    <property type="match status" value="1"/>
</dbReference>
<dbReference type="Pfam" id="PF12823">
    <property type="entry name" value="DUF3817"/>
    <property type="match status" value="1"/>
</dbReference>
<dbReference type="Pfam" id="PF03176">
    <property type="entry name" value="MMPL"/>
    <property type="match status" value="2"/>
</dbReference>
<dbReference type="SUPFAM" id="SSF82866">
    <property type="entry name" value="Multidrug efflux transporter AcrB transmembrane domain"/>
    <property type="match status" value="2"/>
</dbReference>
<dbReference type="PROSITE" id="PS50156">
    <property type="entry name" value="SSD"/>
    <property type="match status" value="2"/>
</dbReference>
<organism>
    <name type="scientific">Streptomyces coelicolor (strain ATCC BAA-471 / A3(2) / M145)</name>
    <dbReference type="NCBI Taxonomy" id="100226"/>
    <lineage>
        <taxon>Bacteria</taxon>
        <taxon>Bacillati</taxon>
        <taxon>Actinomycetota</taxon>
        <taxon>Actinomycetes</taxon>
        <taxon>Kitasatosporales</taxon>
        <taxon>Streptomycetaceae</taxon>
        <taxon>Streptomyces</taxon>
        <taxon>Streptomyces albidoflavus group</taxon>
    </lineage>
</organism>
<sequence>MNSPALLRCLLGSKKRAAVVVAFWVLIAGLLAGVAPALESVEDNASANLPPAASDSMKARDLVRAQLPGQDATPAIIVVRGKGTDAAKSATQSVAAITSALSGTSRPDHVVSVVSTVTAPDAAAELVSQDRGAQLVIVPMEGSPSDESFQNAVDEVRALASDRAGPADVAVTGPAGIATDTVKVFSGGDKVLLLATVVLVLIILLAIYRSPLMALVPLLAVGVAMRVAETLGAILADAGVITVSSQTASIMTVLLFGVGTDYALIITARYRETLLDEPDRARAMQAAVRRTAESVLASASTIVLAMFALLVAVSPALHGFGPYLALGVAVMALVAFTFIPALVLLLGRSVFWPGGVDKAAERSRGAGIWHRIAALVARAPVKVASAVIALLVVLSAGLLGYQESFNTLSGFRAATESEHGQHLIREEFGPGEIAPSTVVVHSQDNLRSSPAPADIATALTDADHVSRVADPRMGKDGKTVFYDVILDLDPYSSKALDAIGPLKQATQSAAQAAGVQDATVLIGGETAQNADIRSALDRDTTLIVLLVLAIVTVVLVLLLRSLLAPLYLVATLLLSFLATLGATTFFTVTVLGDDGIGNRVTAYIFVFLVALGVDYNIFIMSRFKQELRTQPPAKAITAALTRTGGVISSAGLILAATFAVLMTQPIRELFQFGFAMACGILLDTFLIRPLLVPAIVRLLGNRALWPARPGTPQTPSTPTSEPPSADAPAARAAETGTSRLLRAFTWIAIIEACTWAGLLAGMYLKYIPETTELGVRIFGTLHGAAFIVYVSLTVLVAIRLKWRLGRTTIFALLAAVPPFMTIAFEIWARRTGRLPQPTADPSPTPAL</sequence>
<evidence type="ECO:0000255" key="1"/>
<evidence type="ECO:0000256" key="2">
    <source>
        <dbReference type="SAM" id="MobiDB-lite"/>
    </source>
</evidence>
<evidence type="ECO:0000305" key="3"/>
<name>MMPLB_STRCO</name>